<evidence type="ECO:0000250" key="1"/>
<evidence type="ECO:0000255" key="2">
    <source>
        <dbReference type="PROSITE-ProRule" id="PRU10011"/>
    </source>
</evidence>
<evidence type="ECO:0000305" key="3"/>
<feature type="chain" id="PRO_0000182795" description="NADP-specific glutamate dehydrogenase">
    <location>
        <begin position="1"/>
        <end position="457"/>
    </location>
</feature>
<feature type="active site" evidence="2">
    <location>
        <position position="113"/>
    </location>
</feature>
<dbReference type="EC" id="1.4.1.4"/>
<dbReference type="EMBL" id="AF309087">
    <property type="protein sequence ID" value="AAG28788.1"/>
    <property type="molecule type" value="Genomic_DNA"/>
</dbReference>
<dbReference type="SMR" id="Q9HFR6"/>
<dbReference type="BRENDA" id="1.4.1.4">
    <property type="organism ID" value="7423"/>
</dbReference>
<dbReference type="GO" id="GO:0005829">
    <property type="term" value="C:cytosol"/>
    <property type="evidence" value="ECO:0007669"/>
    <property type="project" value="TreeGrafter"/>
</dbReference>
<dbReference type="GO" id="GO:0004354">
    <property type="term" value="F:glutamate dehydrogenase (NADP+) activity"/>
    <property type="evidence" value="ECO:0007669"/>
    <property type="project" value="UniProtKB-EC"/>
</dbReference>
<dbReference type="GO" id="GO:0006537">
    <property type="term" value="P:glutamate biosynthetic process"/>
    <property type="evidence" value="ECO:0007669"/>
    <property type="project" value="TreeGrafter"/>
</dbReference>
<dbReference type="CDD" id="cd05313">
    <property type="entry name" value="NAD_bind_2_Glu_DH"/>
    <property type="match status" value="1"/>
</dbReference>
<dbReference type="FunFam" id="1.10.285.10:FF:000001">
    <property type="entry name" value="Glutamate dehydrogenase"/>
    <property type="match status" value="1"/>
</dbReference>
<dbReference type="FunFam" id="3.40.50.10860:FF:000002">
    <property type="entry name" value="Glutamate dehydrogenase"/>
    <property type="match status" value="1"/>
</dbReference>
<dbReference type="FunFam" id="3.40.50.720:FF:000030">
    <property type="entry name" value="Glutamate dehydrogenase"/>
    <property type="match status" value="1"/>
</dbReference>
<dbReference type="Gene3D" id="1.10.285.10">
    <property type="entry name" value="Glutamate Dehydrogenase, chain A, domain 3"/>
    <property type="match status" value="2"/>
</dbReference>
<dbReference type="Gene3D" id="3.40.50.10860">
    <property type="entry name" value="Leucine Dehydrogenase, chain A, domain 1"/>
    <property type="match status" value="1"/>
</dbReference>
<dbReference type="Gene3D" id="3.40.50.720">
    <property type="entry name" value="NAD(P)-binding Rossmann-like Domain"/>
    <property type="match status" value="1"/>
</dbReference>
<dbReference type="InterPro" id="IPR046346">
    <property type="entry name" value="Aminoacid_DH-like_N_sf"/>
</dbReference>
<dbReference type="InterPro" id="IPR006095">
    <property type="entry name" value="Glu/Leu/Phe/Val/Trp_DH"/>
</dbReference>
<dbReference type="InterPro" id="IPR006096">
    <property type="entry name" value="Glu/Leu/Phe/Val/Trp_DH_C"/>
</dbReference>
<dbReference type="InterPro" id="IPR006097">
    <property type="entry name" value="Glu/Leu/Phe/Val/Trp_DH_dimer"/>
</dbReference>
<dbReference type="InterPro" id="IPR033524">
    <property type="entry name" value="Glu/Leu/Phe/Val_DH_AS"/>
</dbReference>
<dbReference type="InterPro" id="IPR014362">
    <property type="entry name" value="Glu_DH"/>
</dbReference>
<dbReference type="InterPro" id="IPR050724">
    <property type="entry name" value="Glu_Leu_Phe_Val_DH"/>
</dbReference>
<dbReference type="InterPro" id="IPR036291">
    <property type="entry name" value="NAD(P)-bd_dom_sf"/>
</dbReference>
<dbReference type="InterPro" id="IPR033922">
    <property type="entry name" value="NAD_bind_Glu_DH"/>
</dbReference>
<dbReference type="NCBIfam" id="NF006929">
    <property type="entry name" value="PRK09414.1"/>
    <property type="match status" value="1"/>
</dbReference>
<dbReference type="PANTHER" id="PTHR43571">
    <property type="entry name" value="NADP-SPECIFIC GLUTAMATE DEHYDROGENASE 1-RELATED"/>
    <property type="match status" value="1"/>
</dbReference>
<dbReference type="PANTHER" id="PTHR43571:SF1">
    <property type="entry name" value="NADP-SPECIFIC GLUTAMATE DEHYDROGENASE 1-RELATED"/>
    <property type="match status" value="1"/>
</dbReference>
<dbReference type="Pfam" id="PF00208">
    <property type="entry name" value="ELFV_dehydrog"/>
    <property type="match status" value="1"/>
</dbReference>
<dbReference type="Pfam" id="PF02812">
    <property type="entry name" value="ELFV_dehydrog_N"/>
    <property type="match status" value="1"/>
</dbReference>
<dbReference type="PIRSF" id="PIRSF000185">
    <property type="entry name" value="Glu_DH"/>
    <property type="match status" value="1"/>
</dbReference>
<dbReference type="PRINTS" id="PR00082">
    <property type="entry name" value="GLFDHDRGNASE"/>
</dbReference>
<dbReference type="SMART" id="SM00839">
    <property type="entry name" value="ELFV_dehydrog"/>
    <property type="match status" value="1"/>
</dbReference>
<dbReference type="SUPFAM" id="SSF53223">
    <property type="entry name" value="Aminoacid dehydrogenase-like, N-terminal domain"/>
    <property type="match status" value="1"/>
</dbReference>
<dbReference type="SUPFAM" id="SSF51735">
    <property type="entry name" value="NAD(P)-binding Rossmann-fold domains"/>
    <property type="match status" value="1"/>
</dbReference>
<dbReference type="PROSITE" id="PS00074">
    <property type="entry name" value="GLFV_DEHYDROGENASE"/>
    <property type="match status" value="1"/>
</dbReference>
<accession>Q9HFR6</accession>
<organism>
    <name type="scientific">Tuber borchii</name>
    <name type="common">White truffle</name>
    <dbReference type="NCBI Taxonomy" id="42251"/>
    <lineage>
        <taxon>Eukaryota</taxon>
        <taxon>Fungi</taxon>
        <taxon>Dikarya</taxon>
        <taxon>Ascomycota</taxon>
        <taxon>Pezizomycotina</taxon>
        <taxon>Pezizomycetes</taxon>
        <taxon>Pezizales</taxon>
        <taxon>Tuberaceae</taxon>
        <taxon>Tuber</taxon>
    </lineage>
</organism>
<gene>
    <name type="primary">GDH</name>
</gene>
<name>DHE4_TUBBO</name>
<proteinExistence type="inferred from homology"/>
<reference key="1">
    <citation type="journal article" date="2002" name="New Phytol.">
        <title>Biochemical and molecular characterization of NADP-glutamate dehydrogenase from the ectomycorrhizal fungus Tuber borchii.</title>
        <authorList>
            <person name="Vallorani L."/>
            <person name="Polidori E."/>
            <person name="Sacconi C."/>
            <person name="Agostini D."/>
            <person name="Pierleoni R."/>
            <person name="Piccoli G."/>
            <person name="Zeppa S."/>
            <person name="Stocchi V."/>
        </authorList>
        <dbReference type="AGRICOLA" id="IND23280867"/>
    </citation>
    <scope>NUCLEOTIDE SEQUENCE [GENOMIC DNA]</scope>
</reference>
<protein>
    <recommendedName>
        <fullName>NADP-specific glutamate dehydrogenase</fullName>
        <shortName>NADP-GDH</shortName>
        <ecNumber>1.4.1.4</ecNumber>
    </recommendedName>
    <alternativeName>
        <fullName>NADP-dependent glutamate dehydrogenase</fullName>
    </alternativeName>
</protein>
<keyword id="KW-0521">NADP</keyword>
<keyword id="KW-0560">Oxidoreductase</keyword>
<comment type="catalytic activity">
    <reaction>
        <text>L-glutamate + NADP(+) + H2O = 2-oxoglutarate + NH4(+) + NADPH + H(+)</text>
        <dbReference type="Rhea" id="RHEA:11612"/>
        <dbReference type="ChEBI" id="CHEBI:15377"/>
        <dbReference type="ChEBI" id="CHEBI:15378"/>
        <dbReference type="ChEBI" id="CHEBI:16810"/>
        <dbReference type="ChEBI" id="CHEBI:28938"/>
        <dbReference type="ChEBI" id="CHEBI:29985"/>
        <dbReference type="ChEBI" id="CHEBI:57783"/>
        <dbReference type="ChEBI" id="CHEBI:58349"/>
        <dbReference type="EC" id="1.4.1.4"/>
    </reaction>
</comment>
<comment type="subunit">
    <text evidence="1">Homohexamer.</text>
</comment>
<comment type="similarity">
    <text evidence="3">Belongs to the Glu/Leu/Phe/Val dehydrogenases family.</text>
</comment>
<sequence length="457" mass="50155">MSNLAPEPEFQQAYNELVHSLRDQNSSRLPQILRLLCLSSPPERVIQFRVTWEDDKGNFQVNRGYRVQFNSALGPYKGGLRFHPTVNLSILKFLGFEQTFKNALTGLNMGGGKGGSDFDPKGKSDNEIRRFCYSFMRELSKHIGQFTDVPAGDIGVGGREIGYLFGAYESYKNQFEGVLTGKGITWGGSLIRPEATGYGLVYYVAHMISYASGGKETFAGKRVAISGSGNVAQYAALKVLELGGKVITLSDSKGALIATGEEGFNETDIELIAKLKLDRGYLTQLHAAEDSFKSRFKYLPGERPWCHVDKVDVALPSATQNEVSEQEAKELIASGCKFLAEGSNMGSTQEAINVYEEDRKSRKADGLWYGPAKAANCGGVAVSGLEMAQNSQRLTWTSEQVDKELAGIMERCFWNCLNPAKEYFDIAEGELPSLVAGANIAGYVKVVNAMKAQGDWW</sequence>